<dbReference type="EMBL" id="S56599">
    <property type="protein sequence ID" value="AAB25841.2"/>
    <property type="molecule type" value="mRNA"/>
</dbReference>
<dbReference type="EMBL" id="BC024106">
    <property type="protein sequence ID" value="AAH24106.1"/>
    <property type="molecule type" value="mRNA"/>
</dbReference>
<dbReference type="CCDS" id="CCDS38539.1"/>
<dbReference type="RefSeq" id="NP_062287.1">
    <property type="nucleotide sequence ID" value="NM_019414.2"/>
</dbReference>
<dbReference type="SMR" id="Q63836"/>
<dbReference type="BioGRID" id="203157">
    <property type="interactions" value="14"/>
</dbReference>
<dbReference type="FunCoup" id="Q63836">
    <property type="interactions" value="420"/>
</dbReference>
<dbReference type="IntAct" id="Q63836">
    <property type="interactions" value="2"/>
</dbReference>
<dbReference type="MINT" id="Q63836"/>
<dbReference type="STRING" id="10090.ENSMUSP00000088358"/>
<dbReference type="GlyGen" id="Q63836">
    <property type="glycosylation" value="2 sites, 1 O-linked glycan (2 sites)"/>
</dbReference>
<dbReference type="iPTMnet" id="Q63836"/>
<dbReference type="PhosphoSitePlus" id="Q63836"/>
<dbReference type="SwissPalm" id="Q63836"/>
<dbReference type="REPRODUCTION-2DPAGE" id="Q63836"/>
<dbReference type="jPOST" id="Q63836"/>
<dbReference type="PaxDb" id="10090-ENSMUSP00000088358"/>
<dbReference type="PeptideAtlas" id="Q63836"/>
<dbReference type="ProteomicsDB" id="256599"/>
<dbReference type="DNASU" id="20342"/>
<dbReference type="GeneID" id="20342"/>
<dbReference type="KEGG" id="mmu:20342"/>
<dbReference type="UCSC" id="uc008qgx.1">
    <property type="organism name" value="mouse"/>
</dbReference>
<dbReference type="AGR" id="MGI:104859"/>
<dbReference type="CTD" id="20342"/>
<dbReference type="MGI" id="MGI:104859">
    <property type="gene designation" value="Selenbp2"/>
</dbReference>
<dbReference type="eggNOG" id="KOG0918">
    <property type="taxonomic scope" value="Eukaryota"/>
</dbReference>
<dbReference type="InParanoid" id="Q63836"/>
<dbReference type="OrthoDB" id="10252446at2759"/>
<dbReference type="PhylomeDB" id="Q63836"/>
<dbReference type="TreeFam" id="TF315241"/>
<dbReference type="BioGRID-ORCS" id="20342">
    <property type="hits" value="3 hits in 45 CRISPR screens"/>
</dbReference>
<dbReference type="ChiTaRS" id="Selenbp2">
    <property type="organism name" value="mouse"/>
</dbReference>
<dbReference type="PRO" id="PR:Q63836"/>
<dbReference type="Proteomes" id="UP000000589">
    <property type="component" value="Unplaced"/>
</dbReference>
<dbReference type="RNAct" id="Q63836">
    <property type="molecule type" value="protein"/>
</dbReference>
<dbReference type="GO" id="GO:0005829">
    <property type="term" value="C:cytosol"/>
    <property type="evidence" value="ECO:0007669"/>
    <property type="project" value="UniProtKB-SubCell"/>
</dbReference>
<dbReference type="GO" id="GO:0016020">
    <property type="term" value="C:membrane"/>
    <property type="evidence" value="ECO:0007669"/>
    <property type="project" value="UniProtKB-SubCell"/>
</dbReference>
<dbReference type="GO" id="GO:0005634">
    <property type="term" value="C:nucleus"/>
    <property type="evidence" value="ECO:0007669"/>
    <property type="project" value="UniProtKB-SubCell"/>
</dbReference>
<dbReference type="GO" id="GO:0008430">
    <property type="term" value="F:selenium binding"/>
    <property type="evidence" value="ECO:0007669"/>
    <property type="project" value="InterPro"/>
</dbReference>
<dbReference type="GO" id="GO:0015031">
    <property type="term" value="P:protein transport"/>
    <property type="evidence" value="ECO:0007669"/>
    <property type="project" value="UniProtKB-KW"/>
</dbReference>
<dbReference type="InterPro" id="IPR008826">
    <property type="entry name" value="Se-bd"/>
</dbReference>
<dbReference type="PANTHER" id="PTHR23300">
    <property type="entry name" value="METHANETHIOL OXIDASE"/>
    <property type="match status" value="1"/>
</dbReference>
<dbReference type="PANTHER" id="PTHR23300:SF0">
    <property type="entry name" value="METHANETHIOL OXIDASE"/>
    <property type="match status" value="1"/>
</dbReference>
<dbReference type="Pfam" id="PF05694">
    <property type="entry name" value="SBP56"/>
    <property type="match status" value="1"/>
</dbReference>
<dbReference type="SUPFAM" id="SSF75011">
    <property type="entry name" value="3-carboxy-cis,cis-mucoante lactonizing enzyme"/>
    <property type="match status" value="1"/>
</dbReference>
<name>SBP2_MOUSE</name>
<protein>
    <recommendedName>
        <fullName>Selenium-binding protein 2</fullName>
    </recommendedName>
    <alternativeName>
        <fullName>56 kDa acetaminophen-binding protein</fullName>
        <shortName>AP56</shortName>
    </alternativeName>
</protein>
<organism>
    <name type="scientific">Mus musculus</name>
    <name type="common">Mouse</name>
    <dbReference type="NCBI Taxonomy" id="10090"/>
    <lineage>
        <taxon>Eukaryota</taxon>
        <taxon>Metazoa</taxon>
        <taxon>Chordata</taxon>
        <taxon>Craniata</taxon>
        <taxon>Vertebrata</taxon>
        <taxon>Euteleostomi</taxon>
        <taxon>Mammalia</taxon>
        <taxon>Eutheria</taxon>
        <taxon>Euarchontoglires</taxon>
        <taxon>Glires</taxon>
        <taxon>Rodentia</taxon>
        <taxon>Myomorpha</taxon>
        <taxon>Muroidea</taxon>
        <taxon>Muridae</taxon>
        <taxon>Murinae</taxon>
        <taxon>Mus</taxon>
        <taxon>Mus</taxon>
    </lineage>
</organism>
<comment type="function">
    <text evidence="1">Selenium- and acetaminophen-binding protein which may be involved in the sensing of reactive xenobiotics in the cytoplasm. May be involved in intra-Golgi protein transport (By similarity).</text>
</comment>
<comment type="subcellular location">
    <subcellularLocation>
        <location evidence="1">Nucleus</location>
    </subcellularLocation>
    <subcellularLocation>
        <location>Cytoplasm</location>
        <location>Cytosol</location>
    </subcellularLocation>
    <subcellularLocation>
        <location evidence="1">Membrane</location>
        <topology evidence="1">Peripheral membrane protein</topology>
    </subcellularLocation>
    <text evidence="1">May associate with Golgi membrane. May associate with the membrane of autophagosomes (By similarity).</text>
</comment>
<comment type="tissue specificity">
    <text>Mainly expressed in liver.</text>
</comment>
<comment type="PTM">
    <text evidence="1">The N-terminus is blocked.</text>
</comment>
<comment type="similarity">
    <text evidence="3">Belongs to the selenium-binding protein family.</text>
</comment>
<proteinExistence type="evidence at protein level"/>
<reference key="1">
    <citation type="journal article" date="1993" name="Carcinogenesis">
        <title>Different patterns of regulation of the genes encoding the closely related 56 kDa selenium- and acetaminophen-binding proteins in normal tissues and during carcinogenesis.</title>
        <authorList>
            <person name="Lanfear J."/>
            <person name="Fleming J."/>
            <person name="Walker M."/>
            <person name="Harrison P."/>
        </authorList>
    </citation>
    <scope>NUCLEOTIDE SEQUENCE [MRNA]</scope>
    <source>
        <strain>BALB/cJ</strain>
        <tissue>Liver</tissue>
    </source>
</reference>
<reference key="2">
    <citation type="journal article" date="2004" name="Genome Res.">
        <title>The status, quality, and expansion of the NIH full-length cDNA project: the Mammalian Gene Collection (MGC).</title>
        <authorList>
            <consortium name="The MGC Project Team"/>
        </authorList>
    </citation>
    <scope>NUCLEOTIDE SEQUENCE [LARGE SCALE MRNA]</scope>
    <source>
        <strain>FVB/N</strain>
        <tissue>Liver</tissue>
    </source>
</reference>
<reference key="3">
    <citation type="journal article" date="1992" name="Biochem. Biophys. Res. Commun.">
        <title>A metabolite of acetaminophen covalently binds to the 56 kDa selenium binding protein.</title>
        <authorList>
            <person name="Pumford N.R."/>
            <person name="Martin B.M."/>
            <person name="Hinson J.A."/>
        </authorList>
    </citation>
    <scope>PROTEIN SEQUENCE OF 175-189; 196-220; 228-242; 290-296; 334-343 AND 399-408</scope>
</reference>
<reference key="4">
    <citation type="journal article" date="2006" name="Electrophoresis">
        <title>Selenium-binding protein 2, the major hepatic target for acetaminophen, shows sex differences in protein abundance.</title>
        <authorList>
            <person name="Mattow J."/>
            <person name="Demuth I."/>
            <person name="Haeselbarth G."/>
            <person name="Jungblut P.R."/>
            <person name="Klose J."/>
        </authorList>
    </citation>
    <scope>PROTEIN SEQUENCE OF 101-113; 227-230 AND 269-276</scope>
    <scope>IDENTIFICATION BY MASS SPECTROMETRY</scope>
</reference>
<reference key="5">
    <citation type="journal article" date="2004" name="Rapid Commun. Mass Spectrom.">
        <title>Phosphoproteome analysis of mouse liver using immobilized metal affinity purification and linear ion trap mass spectrometry.</title>
        <authorList>
            <person name="Jin W.-H."/>
            <person name="Dai J."/>
            <person name="Zhou H."/>
            <person name="Xia Q.-C."/>
            <person name="Zou H.-F."/>
            <person name="Zeng R."/>
        </authorList>
    </citation>
    <scope>PHOSPHORYLATION AT SER-467</scope>
</reference>
<reference key="6">
    <citation type="journal article" date="2010" name="Cell">
        <title>A tissue-specific atlas of mouse protein phosphorylation and expression.</title>
        <authorList>
            <person name="Huttlin E.L."/>
            <person name="Jedrychowski M.P."/>
            <person name="Elias J.E."/>
            <person name="Goswami T."/>
            <person name="Rad R."/>
            <person name="Beausoleil S.A."/>
            <person name="Villen J."/>
            <person name="Haas W."/>
            <person name="Sowa M.E."/>
            <person name="Gygi S.P."/>
        </authorList>
    </citation>
    <scope>IDENTIFICATION BY MASS SPECTROMETRY [LARGE SCALE ANALYSIS]</scope>
    <source>
        <tissue>Liver</tissue>
    </source>
</reference>
<accession>Q63836</accession>
<accession>Q8R1T6</accession>
<keyword id="KW-0963">Cytoplasm</keyword>
<keyword id="KW-0903">Direct protein sequencing</keyword>
<keyword id="KW-0472">Membrane</keyword>
<keyword id="KW-0539">Nucleus</keyword>
<keyword id="KW-0597">Phosphoprotein</keyword>
<keyword id="KW-0653">Protein transport</keyword>
<keyword id="KW-1185">Reference proteome</keyword>
<keyword id="KW-0711">Selenium</keyword>
<keyword id="KW-0813">Transport</keyword>
<feature type="chain" id="PRO_0000174635" description="Selenium-binding protein 2">
    <location>
        <begin position="1"/>
        <end position="472"/>
    </location>
</feature>
<feature type="modified residue" description="Phosphoserine" evidence="2">
    <location>
        <position position="467"/>
    </location>
</feature>
<feature type="sequence conflict" description="In Ref. 1; AAB25841." evidence="3" ref="1">
    <original>I</original>
    <variation>M</variation>
    <location>
        <position position="100"/>
    </location>
</feature>
<gene>
    <name type="primary">Selenbp2</name>
    <name type="synonym">Lpsb2</name>
</gene>
<evidence type="ECO:0000250" key="1"/>
<evidence type="ECO:0000269" key="2">
    <source>
    </source>
</evidence>
<evidence type="ECO:0000305" key="3"/>
<sequence>MATKCTKCGPGYPTPLEAMKGPREEIVYLPCIYRNTGTEAPDYLATVDVDPKSPQYSQVIHRLPMPYLKDELHHSGWNTCSSCFGDSTKSRNKLILPGLISSRIYVVDVGSEPRAPKLHKVIEASEIQAKCNVSNTHTSHCLASGEVMVNTLGDLQGNGKGSFVLLDGETFEVKGTWEKPGGASPMGYDFWYQPRHNVMVSTEWAAPNVFKDGFNPAHVEAGLYGSRIFVWDWQRHEIIQTLQMTDGLIPLEIRFLHDPSATQGFVGCALSSNIQRFYKNEEGTWSVEKVIQVPSKKVKGWMLPEMPGLITDILLSLDDRFLYFSNWLHGDIRQYDISNPQKPRLTGQIFLGGSIVRGGSVQVLEDQELTCQPEPLVVKGKRIPGGPQMIQLSLDGKRLYATTSLYSDWDKQFYPDLIREGSVMLQVDVDTVNGGLKLNPNFLVDFGKEPLGPALAHELRYPGGDCSSDIWI</sequence>